<organism>
    <name type="scientific">Arabidopsis thaliana</name>
    <name type="common">Mouse-ear cress</name>
    <dbReference type="NCBI Taxonomy" id="3702"/>
    <lineage>
        <taxon>Eukaryota</taxon>
        <taxon>Viridiplantae</taxon>
        <taxon>Streptophyta</taxon>
        <taxon>Embryophyta</taxon>
        <taxon>Tracheophyta</taxon>
        <taxon>Spermatophyta</taxon>
        <taxon>Magnoliopsida</taxon>
        <taxon>eudicotyledons</taxon>
        <taxon>Gunneridae</taxon>
        <taxon>Pentapetalae</taxon>
        <taxon>rosids</taxon>
        <taxon>malvids</taxon>
        <taxon>Brassicales</taxon>
        <taxon>Brassicaceae</taxon>
        <taxon>Camelineae</taxon>
        <taxon>Arabidopsis</taxon>
    </lineage>
</organism>
<sequence length="342" mass="38191">MMKMMRNKPTNLPTAGMTNGGRGSGGGGGGGGRESGGRDLEIRPGGMLVQKRNPDLDPVGPPPPPMIRVRIKYGAVYHEINISPQASFGELKKMLTGPTGIHHQDQKLMYKDKERDSKAFLDVSGVKDKSKMVLIEDPLSQEKRFLEMRKIAKTEKASKAISDISLEVDRLGGRVSAFEMVTKKGGKIAEKDLVTVIELLMNELIKLDAIVAEGDVKLQRKMQVKRVQNYVETLDALKVKNSMANGQQKQSSTAQRLAPIQEHNNEERQEQKPIQSLMDMPIQYKEKKQEIEEEPRNSGEGPFVLDSSAKWETFDHHPVTPLSSTTAKNNAIPPRFNWEFFD</sequence>
<accession>Q0WUQ1</accession>
<accession>Q9FJ86</accession>
<comment type="function">
    <text evidence="1">Co-chaperone that regulates diverse cellular pathways, such as programmed cell death and stress responses.</text>
</comment>
<comment type="subunit">
    <text evidence="1">Binds to the ATPase domain of HSP70/HSC70 chaperones.</text>
</comment>
<comment type="sequence caution" evidence="5">
    <conflict type="erroneous initiation">
        <sequence resource="EMBL-CDS" id="BAB11054"/>
    </conflict>
    <text>Truncated N-terminus.</text>
</comment>
<name>BAG1_ARATH</name>
<feature type="chain" id="PRO_0000415521" description="BAG family molecular chaperone regulator 1">
    <location>
        <begin position="1"/>
        <end position="342"/>
    </location>
</feature>
<feature type="domain" description="Ubiquitin-like" evidence="2">
    <location>
        <begin position="65"/>
        <end position="141"/>
    </location>
</feature>
<feature type="domain" description="BAG" evidence="3">
    <location>
        <begin position="160"/>
        <end position="238"/>
    </location>
</feature>
<feature type="region of interest" description="Disordered" evidence="4">
    <location>
        <begin position="1"/>
        <end position="41"/>
    </location>
</feature>
<feature type="compositionally biased region" description="Polar residues" evidence="4">
    <location>
        <begin position="8"/>
        <end position="17"/>
    </location>
</feature>
<feature type="compositionally biased region" description="Gly residues" evidence="4">
    <location>
        <begin position="18"/>
        <end position="34"/>
    </location>
</feature>
<feature type="modified residue" description="Phosphoserine" evidence="6">
    <location>
        <position position="298"/>
    </location>
</feature>
<feature type="strand" evidence="8">
    <location>
        <begin position="67"/>
        <end position="73"/>
    </location>
</feature>
<feature type="strand" evidence="8">
    <location>
        <begin position="76"/>
        <end position="82"/>
    </location>
</feature>
<feature type="helix" evidence="8">
    <location>
        <begin position="88"/>
        <end position="99"/>
    </location>
</feature>
<feature type="helix" evidence="8">
    <location>
        <begin position="103"/>
        <end position="105"/>
    </location>
</feature>
<feature type="strand" evidence="8">
    <location>
        <begin position="106"/>
        <end position="110"/>
    </location>
</feature>
<feature type="turn" evidence="8">
    <location>
        <begin position="121"/>
        <end position="125"/>
    </location>
</feature>
<feature type="strand" evidence="8">
    <location>
        <begin position="130"/>
        <end position="136"/>
    </location>
</feature>
<feature type="helix" evidence="7">
    <location>
        <begin position="157"/>
        <end position="183"/>
    </location>
</feature>
<feature type="helix" evidence="7">
    <location>
        <begin position="190"/>
        <end position="207"/>
    </location>
</feature>
<feature type="helix" evidence="7">
    <location>
        <begin position="214"/>
        <end position="240"/>
    </location>
</feature>
<protein>
    <recommendedName>
        <fullName>BAG family molecular chaperone regulator 1</fullName>
    </recommendedName>
    <alternativeName>
        <fullName>Bcl-2-associated athanogene 1</fullName>
    </alternativeName>
</protein>
<dbReference type="EMBL" id="AB015478">
    <property type="protein sequence ID" value="BAB11054.1"/>
    <property type="status" value="ALT_INIT"/>
    <property type="molecule type" value="Genomic_DNA"/>
</dbReference>
<dbReference type="EMBL" id="CP002688">
    <property type="protein sequence ID" value="AED96167.1"/>
    <property type="molecule type" value="Genomic_DNA"/>
</dbReference>
<dbReference type="EMBL" id="AK227095">
    <property type="protein sequence ID" value="BAE99147.1"/>
    <property type="molecule type" value="mRNA"/>
</dbReference>
<dbReference type="EMBL" id="BT030041">
    <property type="protein sequence ID" value="ABN04779.1"/>
    <property type="molecule type" value="mRNA"/>
</dbReference>
<dbReference type="RefSeq" id="NP_200019.2">
    <property type="nucleotide sequence ID" value="NM_124585.4"/>
</dbReference>
<dbReference type="PDB" id="4HWC">
    <property type="method" value="X-ray"/>
    <property type="resolution" value="1.80 A"/>
    <property type="chains" value="A/B/C/D/E/F=157-241"/>
</dbReference>
<dbReference type="PDB" id="4HWI">
    <property type="method" value="X-ray"/>
    <property type="resolution" value="2.27 A"/>
    <property type="chains" value="B=66-242"/>
</dbReference>
<dbReference type="PDBsum" id="4HWC"/>
<dbReference type="PDBsum" id="4HWI"/>
<dbReference type="SMR" id="Q0WUQ1"/>
<dbReference type="BioGRID" id="20526">
    <property type="interactions" value="1"/>
</dbReference>
<dbReference type="FunCoup" id="Q0WUQ1">
    <property type="interactions" value="5"/>
</dbReference>
<dbReference type="STRING" id="3702.Q0WUQ1"/>
<dbReference type="iPTMnet" id="Q0WUQ1"/>
<dbReference type="PaxDb" id="3702-AT5G52060.1"/>
<dbReference type="ProteomicsDB" id="240809"/>
<dbReference type="EnsemblPlants" id="AT5G52060.1">
    <property type="protein sequence ID" value="AT5G52060.1"/>
    <property type="gene ID" value="AT5G52060"/>
</dbReference>
<dbReference type="GeneID" id="835281"/>
<dbReference type="Gramene" id="AT5G52060.1">
    <property type="protein sequence ID" value="AT5G52060.1"/>
    <property type="gene ID" value="AT5G52060"/>
</dbReference>
<dbReference type="KEGG" id="ath:AT5G52060"/>
<dbReference type="Araport" id="AT5G52060"/>
<dbReference type="TAIR" id="AT5G52060">
    <property type="gene designation" value="BAG1"/>
</dbReference>
<dbReference type="eggNOG" id="KOG4361">
    <property type="taxonomic scope" value="Eukaryota"/>
</dbReference>
<dbReference type="HOGENOM" id="CLU_043370_1_0_1"/>
<dbReference type="InParanoid" id="Q0WUQ1"/>
<dbReference type="OMA" id="AFEMVIN"/>
<dbReference type="PhylomeDB" id="Q0WUQ1"/>
<dbReference type="EvolutionaryTrace" id="Q0WUQ1"/>
<dbReference type="PRO" id="PR:Q0WUQ1"/>
<dbReference type="Proteomes" id="UP000006548">
    <property type="component" value="Chromosome 5"/>
</dbReference>
<dbReference type="ExpressionAtlas" id="Q0WUQ1">
    <property type="expression patterns" value="baseline and differential"/>
</dbReference>
<dbReference type="GO" id="GO:0005829">
    <property type="term" value="C:cytosol"/>
    <property type="evidence" value="ECO:0000314"/>
    <property type="project" value="TAIR"/>
</dbReference>
<dbReference type="GO" id="GO:0005739">
    <property type="term" value="C:mitochondrion"/>
    <property type="evidence" value="ECO:0007005"/>
    <property type="project" value="TAIR"/>
</dbReference>
<dbReference type="GO" id="GO:0005634">
    <property type="term" value="C:nucleus"/>
    <property type="evidence" value="ECO:0000314"/>
    <property type="project" value="TAIR"/>
</dbReference>
<dbReference type="GO" id="GO:0051087">
    <property type="term" value="F:protein-folding chaperone binding"/>
    <property type="evidence" value="ECO:0007669"/>
    <property type="project" value="InterPro"/>
</dbReference>
<dbReference type="GO" id="GO:0071629">
    <property type="term" value="P:cytoplasm protein quality control by the ubiquitin-proteasome system"/>
    <property type="evidence" value="ECO:0000315"/>
    <property type="project" value="TAIR"/>
</dbReference>
<dbReference type="CDD" id="cd17054">
    <property type="entry name" value="Ubl_AtBAG1_like"/>
    <property type="match status" value="1"/>
</dbReference>
<dbReference type="FunFam" id="1.20.58.120:FF:000011">
    <property type="entry name" value="BAG family molecular chaperone regulator 1"/>
    <property type="match status" value="1"/>
</dbReference>
<dbReference type="FunFam" id="3.10.20.90:FF:000298">
    <property type="entry name" value="BAG family molecular chaperone regulator 1"/>
    <property type="match status" value="1"/>
</dbReference>
<dbReference type="Gene3D" id="1.20.58.120">
    <property type="entry name" value="BAG domain"/>
    <property type="match status" value="1"/>
</dbReference>
<dbReference type="Gene3D" id="3.10.20.90">
    <property type="entry name" value="Phosphatidylinositol 3-kinase Catalytic Subunit, Chain A, domain 1"/>
    <property type="match status" value="1"/>
</dbReference>
<dbReference type="IDEAL" id="IID50190"/>
<dbReference type="InterPro" id="IPR039773">
    <property type="entry name" value="BAG_chaperone_regulator"/>
</dbReference>
<dbReference type="InterPro" id="IPR036533">
    <property type="entry name" value="BAG_dom_sf"/>
</dbReference>
<dbReference type="InterPro" id="IPR003103">
    <property type="entry name" value="BAG_domain"/>
</dbReference>
<dbReference type="InterPro" id="IPR000626">
    <property type="entry name" value="Ubiquitin-like_dom"/>
</dbReference>
<dbReference type="InterPro" id="IPR029071">
    <property type="entry name" value="Ubiquitin-like_domsf"/>
</dbReference>
<dbReference type="PANTHER" id="PTHR12329:SF11">
    <property type="entry name" value="BAG FAMILY MOLECULAR CHAPERONE REGULATOR 1"/>
    <property type="match status" value="1"/>
</dbReference>
<dbReference type="PANTHER" id="PTHR12329">
    <property type="entry name" value="BCL2-ASSOCIATED ATHANOGENE"/>
    <property type="match status" value="1"/>
</dbReference>
<dbReference type="Pfam" id="PF02179">
    <property type="entry name" value="BAG"/>
    <property type="match status" value="1"/>
</dbReference>
<dbReference type="SMART" id="SM00264">
    <property type="entry name" value="BAG"/>
    <property type="match status" value="1"/>
</dbReference>
<dbReference type="SUPFAM" id="SSF63491">
    <property type="entry name" value="BAG domain"/>
    <property type="match status" value="1"/>
</dbReference>
<dbReference type="SUPFAM" id="SSF54236">
    <property type="entry name" value="Ubiquitin-like"/>
    <property type="match status" value="1"/>
</dbReference>
<dbReference type="PROSITE" id="PS51035">
    <property type="entry name" value="BAG"/>
    <property type="match status" value="1"/>
</dbReference>
<dbReference type="PROSITE" id="PS50053">
    <property type="entry name" value="UBIQUITIN_2"/>
    <property type="match status" value="1"/>
</dbReference>
<keyword id="KW-0002">3D-structure</keyword>
<keyword id="KW-0143">Chaperone</keyword>
<keyword id="KW-0597">Phosphoprotein</keyword>
<keyword id="KW-1185">Reference proteome</keyword>
<reference key="1">
    <citation type="journal article" date="1998" name="DNA Res.">
        <title>Structural analysis of Arabidopsis thaliana chromosome 5. VII. Sequence features of the regions of 1,013,767 bp covered by sixteen physically assigned P1 and TAC clones.</title>
        <authorList>
            <person name="Nakamura Y."/>
            <person name="Sato S."/>
            <person name="Asamizu E."/>
            <person name="Kaneko T."/>
            <person name="Kotani H."/>
            <person name="Miyajima N."/>
            <person name="Tabata S."/>
        </authorList>
    </citation>
    <scope>NUCLEOTIDE SEQUENCE [LARGE SCALE GENOMIC DNA]</scope>
    <source>
        <strain>cv. Columbia</strain>
    </source>
</reference>
<reference key="2">
    <citation type="journal article" date="2017" name="Plant J.">
        <title>Araport11: a complete reannotation of the Arabidopsis thaliana reference genome.</title>
        <authorList>
            <person name="Cheng C.Y."/>
            <person name="Krishnakumar V."/>
            <person name="Chan A.P."/>
            <person name="Thibaud-Nissen F."/>
            <person name="Schobel S."/>
            <person name="Town C.D."/>
        </authorList>
    </citation>
    <scope>GENOME REANNOTATION</scope>
    <source>
        <strain>cv. Columbia</strain>
    </source>
</reference>
<reference key="3">
    <citation type="submission" date="2006-07" db="EMBL/GenBank/DDBJ databases">
        <title>Large-scale analysis of RIKEN Arabidopsis full-length (RAFL) cDNAs.</title>
        <authorList>
            <person name="Totoki Y."/>
            <person name="Seki M."/>
            <person name="Ishida J."/>
            <person name="Nakajima M."/>
            <person name="Enju A."/>
            <person name="Kamiya A."/>
            <person name="Narusaka M."/>
            <person name="Shin-i T."/>
            <person name="Nakagawa M."/>
            <person name="Sakamoto N."/>
            <person name="Oishi K."/>
            <person name="Kohara Y."/>
            <person name="Kobayashi M."/>
            <person name="Toyoda A."/>
            <person name="Sakaki Y."/>
            <person name="Sakurai T."/>
            <person name="Iida K."/>
            <person name="Akiyama K."/>
            <person name="Satou M."/>
            <person name="Toyoda T."/>
            <person name="Konagaya A."/>
            <person name="Carninci P."/>
            <person name="Kawai J."/>
            <person name="Hayashizaki Y."/>
            <person name="Shinozaki K."/>
        </authorList>
    </citation>
    <scope>NUCLEOTIDE SEQUENCE [LARGE SCALE MRNA]</scope>
    <source>
        <strain>cv. Columbia</strain>
    </source>
</reference>
<reference key="4">
    <citation type="submission" date="2007-01" db="EMBL/GenBank/DDBJ databases">
        <title>Arabidopsis ORF clones.</title>
        <authorList>
            <person name="Bautista V.R."/>
            <person name="Kim C.J."/>
            <person name="Chen H."/>
            <person name="Wu S.Y."/>
            <person name="De Los Reyes C."/>
            <person name="Ecker J.R."/>
        </authorList>
    </citation>
    <scope>NUCLEOTIDE SEQUENCE [LARGE SCALE MRNA] OF 17-342</scope>
    <source>
        <strain>cv. Columbia</strain>
    </source>
</reference>
<reference key="5">
    <citation type="journal article" date="2003" name="Plant Sci.">
        <title>The BAG-family proteins in Arabidopsis thaliana.</title>
        <authorList>
            <person name="Juqiang Y."/>
            <person name="Cixin H."/>
            <person name="Hong Z."/>
        </authorList>
    </citation>
    <scope>GENE FAMILY</scope>
    <scope>NOMENCLATURE</scope>
</reference>
<reference key="6">
    <citation type="journal article" date="2006" name="J. Biol. Chem.">
        <title>Identification and functional characterization of the BAG protein family in Arabidopsis thaliana.</title>
        <authorList>
            <person name="Doukhanina E.V."/>
            <person name="Chen S."/>
            <person name="van der Zalm E."/>
            <person name="Godzik A."/>
            <person name="Reed J."/>
            <person name="Dickman M.B."/>
        </authorList>
    </citation>
    <scope>GENE FAMILY</scope>
</reference>
<reference key="7">
    <citation type="journal article" date="2009" name="Plant Physiol.">
        <title>Large-scale Arabidopsis phosphoproteome profiling reveals novel chloroplast kinase substrates and phosphorylation networks.</title>
        <authorList>
            <person name="Reiland S."/>
            <person name="Messerli G."/>
            <person name="Baerenfaller K."/>
            <person name="Gerrits B."/>
            <person name="Endler A."/>
            <person name="Grossmann J."/>
            <person name="Gruissem W."/>
            <person name="Baginsky S."/>
        </authorList>
    </citation>
    <scope>PHOSPHORYLATION [LARGE SCALE ANALYSIS] AT SER-298</scope>
    <scope>IDENTIFICATION BY MASS SPECTROMETRY [LARGE SCALE ANALYSIS]</scope>
</reference>
<gene>
    <name type="primary">BAG1</name>
    <name type="ordered locus">At5g52060</name>
    <name type="ORF">MSG15.15</name>
</gene>
<proteinExistence type="evidence at protein level"/>
<evidence type="ECO:0000250" key="1"/>
<evidence type="ECO:0000255" key="2">
    <source>
        <dbReference type="PROSITE-ProRule" id="PRU00214"/>
    </source>
</evidence>
<evidence type="ECO:0000255" key="3">
    <source>
        <dbReference type="PROSITE-ProRule" id="PRU00369"/>
    </source>
</evidence>
<evidence type="ECO:0000256" key="4">
    <source>
        <dbReference type="SAM" id="MobiDB-lite"/>
    </source>
</evidence>
<evidence type="ECO:0000305" key="5"/>
<evidence type="ECO:0007744" key="6">
    <source>
    </source>
</evidence>
<evidence type="ECO:0007829" key="7">
    <source>
        <dbReference type="PDB" id="4HWC"/>
    </source>
</evidence>
<evidence type="ECO:0007829" key="8">
    <source>
        <dbReference type="PDB" id="4HWI"/>
    </source>
</evidence>